<name>IPO8_DANRE</name>
<proteinExistence type="inferred from homology"/>
<protein>
    <recommendedName>
        <fullName>Importin-8</fullName>
        <shortName>Imp8</shortName>
    </recommendedName>
</protein>
<reference key="1">
    <citation type="journal article" date="2013" name="Nature">
        <title>The zebrafish reference genome sequence and its relationship to the human genome.</title>
        <authorList>
            <person name="Howe K."/>
            <person name="Clark M.D."/>
            <person name="Torroja C.F."/>
            <person name="Torrance J."/>
            <person name="Berthelot C."/>
            <person name="Muffato M."/>
            <person name="Collins J.E."/>
            <person name="Humphray S."/>
            <person name="McLaren K."/>
            <person name="Matthews L."/>
            <person name="McLaren S."/>
            <person name="Sealy I."/>
            <person name="Caccamo M."/>
            <person name="Churcher C."/>
            <person name="Scott C."/>
            <person name="Barrett J.C."/>
            <person name="Koch R."/>
            <person name="Rauch G.J."/>
            <person name="White S."/>
            <person name="Chow W."/>
            <person name="Kilian B."/>
            <person name="Quintais L.T."/>
            <person name="Guerra-Assuncao J.A."/>
            <person name="Zhou Y."/>
            <person name="Gu Y."/>
            <person name="Yen J."/>
            <person name="Vogel J.H."/>
            <person name="Eyre T."/>
            <person name="Redmond S."/>
            <person name="Banerjee R."/>
            <person name="Chi J."/>
            <person name="Fu B."/>
            <person name="Langley E."/>
            <person name="Maguire S.F."/>
            <person name="Laird G.K."/>
            <person name="Lloyd D."/>
            <person name="Kenyon E."/>
            <person name="Donaldson S."/>
            <person name="Sehra H."/>
            <person name="Almeida-King J."/>
            <person name="Loveland J."/>
            <person name="Trevanion S."/>
            <person name="Jones M."/>
            <person name="Quail M."/>
            <person name="Willey D."/>
            <person name="Hunt A."/>
            <person name="Burton J."/>
            <person name="Sims S."/>
            <person name="McLay K."/>
            <person name="Plumb B."/>
            <person name="Davis J."/>
            <person name="Clee C."/>
            <person name="Oliver K."/>
            <person name="Clark R."/>
            <person name="Riddle C."/>
            <person name="Elliot D."/>
            <person name="Threadgold G."/>
            <person name="Harden G."/>
            <person name="Ware D."/>
            <person name="Begum S."/>
            <person name="Mortimore B."/>
            <person name="Kerry G."/>
            <person name="Heath P."/>
            <person name="Phillimore B."/>
            <person name="Tracey A."/>
            <person name="Corby N."/>
            <person name="Dunn M."/>
            <person name="Johnson C."/>
            <person name="Wood J."/>
            <person name="Clark S."/>
            <person name="Pelan S."/>
            <person name="Griffiths G."/>
            <person name="Smith M."/>
            <person name="Glithero R."/>
            <person name="Howden P."/>
            <person name="Barker N."/>
            <person name="Lloyd C."/>
            <person name="Stevens C."/>
            <person name="Harley J."/>
            <person name="Holt K."/>
            <person name="Panagiotidis G."/>
            <person name="Lovell J."/>
            <person name="Beasley H."/>
            <person name="Henderson C."/>
            <person name="Gordon D."/>
            <person name="Auger K."/>
            <person name="Wright D."/>
            <person name="Collins J."/>
            <person name="Raisen C."/>
            <person name="Dyer L."/>
            <person name="Leung K."/>
            <person name="Robertson L."/>
            <person name="Ambridge K."/>
            <person name="Leongamornlert D."/>
            <person name="McGuire S."/>
            <person name="Gilderthorp R."/>
            <person name="Griffiths C."/>
            <person name="Manthravadi D."/>
            <person name="Nichol S."/>
            <person name="Barker G."/>
            <person name="Whitehead S."/>
            <person name="Kay M."/>
            <person name="Brown J."/>
            <person name="Murnane C."/>
            <person name="Gray E."/>
            <person name="Humphries M."/>
            <person name="Sycamore N."/>
            <person name="Barker D."/>
            <person name="Saunders D."/>
            <person name="Wallis J."/>
            <person name="Babbage A."/>
            <person name="Hammond S."/>
            <person name="Mashreghi-Mohammadi M."/>
            <person name="Barr L."/>
            <person name="Martin S."/>
            <person name="Wray P."/>
            <person name="Ellington A."/>
            <person name="Matthews N."/>
            <person name="Ellwood M."/>
            <person name="Woodmansey R."/>
            <person name="Clark G."/>
            <person name="Cooper J."/>
            <person name="Tromans A."/>
            <person name="Grafham D."/>
            <person name="Skuce C."/>
            <person name="Pandian R."/>
            <person name="Andrews R."/>
            <person name="Harrison E."/>
            <person name="Kimberley A."/>
            <person name="Garnett J."/>
            <person name="Fosker N."/>
            <person name="Hall R."/>
            <person name="Garner P."/>
            <person name="Kelly D."/>
            <person name="Bird C."/>
            <person name="Palmer S."/>
            <person name="Gehring I."/>
            <person name="Berger A."/>
            <person name="Dooley C.M."/>
            <person name="Ersan-Urun Z."/>
            <person name="Eser C."/>
            <person name="Geiger H."/>
            <person name="Geisler M."/>
            <person name="Karotki L."/>
            <person name="Kirn A."/>
            <person name="Konantz J."/>
            <person name="Konantz M."/>
            <person name="Oberlander M."/>
            <person name="Rudolph-Geiger S."/>
            <person name="Teucke M."/>
            <person name="Lanz C."/>
            <person name="Raddatz G."/>
            <person name="Osoegawa K."/>
            <person name="Zhu B."/>
            <person name="Rapp A."/>
            <person name="Widaa S."/>
            <person name="Langford C."/>
            <person name="Yang F."/>
            <person name="Schuster S.C."/>
            <person name="Carter N.P."/>
            <person name="Harrow J."/>
            <person name="Ning Z."/>
            <person name="Herrero J."/>
            <person name="Searle S.M."/>
            <person name="Enright A."/>
            <person name="Geisler R."/>
            <person name="Plasterk R.H."/>
            <person name="Lee C."/>
            <person name="Westerfield M."/>
            <person name="de Jong P.J."/>
            <person name="Zon L.I."/>
            <person name="Postlethwait J.H."/>
            <person name="Nusslein-Volhard C."/>
            <person name="Hubbard T.J."/>
            <person name="Roest Crollius H."/>
            <person name="Rogers J."/>
            <person name="Stemple D.L."/>
        </authorList>
    </citation>
    <scope>NUCLEOTIDE SEQUENCE [LARGE SCALE GENOMIC DNA]</scope>
    <source>
        <strain>Tuebingen</strain>
    </source>
</reference>
<reference key="2">
    <citation type="journal article" date="2021" name="Am. J. Hum. Genet.">
        <title>Bi-allelic variants in IPO8 cause a connective tissue disorder associated with cardiovascular defects, skeletal abnormalities, and immune dysregulation.</title>
        <authorList>
            <person name="Ziegler A."/>
            <person name="Duclaux-Loras R."/>
            <person name="Revenu C."/>
            <person name="Charbit-Henrion F."/>
            <person name="Begue B."/>
            <person name="Duroure K."/>
            <person name="Grimaud L."/>
            <person name="Guihot A.L."/>
            <person name="Desquiret-Dumas V."/>
            <person name="Zarhrate M."/>
            <person name="Cagnard N."/>
            <person name="Mas E."/>
            <person name="Breton A."/>
            <person name="Edouard T."/>
            <person name="Billon C."/>
            <person name="Frank M."/>
            <person name="Colin E."/>
            <person name="Lenaers G."/>
            <person name="Henrion D."/>
            <person name="Lyonnet S."/>
            <person name="Faivre L."/>
            <person name="Alembik Y."/>
            <person name="Philippe A."/>
            <person name="Moulin B."/>
            <person name="Reinstein E."/>
            <person name="Tzur S."/>
            <person name="Attali R."/>
            <person name="McGillivray G."/>
            <person name="White S.M."/>
            <person name="Gallacher L."/>
            <person name="Kutsche K."/>
            <person name="Schneeberger P."/>
            <person name="Girisha K.M."/>
            <person name="Nayak S.S."/>
            <person name="Pais L."/>
            <person name="Maroofian R."/>
            <person name="Rad A."/>
            <person name="Vona B."/>
            <person name="Karimiani E.G."/>
            <person name="Lekszas C."/>
            <person name="Haaf T."/>
            <person name="Martin L."/>
            <person name="Ruemmele F."/>
            <person name="Bonneau D."/>
            <person name="Cerf-Bensussan N."/>
            <person name="Del Bene F."/>
            <person name="Parlato M."/>
        </authorList>
    </citation>
    <scope>FUNCTION</scope>
    <scope>DISRUPTION PHENOTYPE</scope>
</reference>
<keyword id="KW-0963">Cytoplasm</keyword>
<keyword id="KW-0539">Nucleus</keyword>
<keyword id="KW-0653">Protein transport</keyword>
<keyword id="KW-1185">Reference proteome</keyword>
<keyword id="KW-0813">Transport</keyword>
<feature type="chain" id="PRO_0000455801" description="Importin-8">
    <location>
        <begin position="1"/>
        <end position="1024"/>
    </location>
</feature>
<feature type="domain" description="Importin N-terminal" evidence="3">
    <location>
        <begin position="22"/>
        <end position="102"/>
    </location>
</feature>
<feature type="region of interest" description="Disordered" evidence="4">
    <location>
        <begin position="896"/>
        <end position="969"/>
    </location>
</feature>
<feature type="compositionally biased region" description="Acidic residues" evidence="4">
    <location>
        <begin position="902"/>
        <end position="917"/>
    </location>
</feature>
<feature type="compositionally biased region" description="Acidic residues" evidence="4">
    <location>
        <begin position="934"/>
        <end position="952"/>
    </location>
</feature>
<dbReference type="EMBL" id="CT573126">
    <property type="status" value="NOT_ANNOTATED_CDS"/>
    <property type="molecule type" value="Genomic_DNA"/>
</dbReference>
<dbReference type="SMR" id="A5WW24"/>
<dbReference type="FunCoup" id="A5WW24">
    <property type="interactions" value="2241"/>
</dbReference>
<dbReference type="STRING" id="7955.ENSDARP00000110587"/>
<dbReference type="PaxDb" id="7955-ENSDARP00000110587"/>
<dbReference type="PeptideAtlas" id="A5WW24"/>
<dbReference type="Ensembl" id="ENSDART00000128937">
    <property type="protein sequence ID" value="ENSDARP00000110587"/>
    <property type="gene ID" value="ENSDARG00000058159"/>
</dbReference>
<dbReference type="eggNOG" id="KOG1991">
    <property type="taxonomic scope" value="Eukaryota"/>
</dbReference>
<dbReference type="HOGENOM" id="CLU_004196_1_1_1"/>
<dbReference type="InParanoid" id="A5WW24"/>
<dbReference type="OMA" id="KNFEYRS"/>
<dbReference type="PhylomeDB" id="A5WW24"/>
<dbReference type="TreeFam" id="TF300634"/>
<dbReference type="PRO" id="PR:A5WW24"/>
<dbReference type="Proteomes" id="UP000000437">
    <property type="component" value="Unplaced"/>
</dbReference>
<dbReference type="Bgee" id="ENSDARG00000058159">
    <property type="expression patterns" value="Expressed in zone of skin and 27 other cell types or tissues"/>
</dbReference>
<dbReference type="ExpressionAtlas" id="A5WW24">
    <property type="expression patterns" value="baseline and differential"/>
</dbReference>
<dbReference type="GO" id="GO:0005737">
    <property type="term" value="C:cytoplasm"/>
    <property type="evidence" value="ECO:0007669"/>
    <property type="project" value="UniProtKB-SubCell"/>
</dbReference>
<dbReference type="GO" id="GO:0005634">
    <property type="term" value="C:nucleus"/>
    <property type="evidence" value="ECO:0007669"/>
    <property type="project" value="UniProtKB-SubCell"/>
</dbReference>
<dbReference type="GO" id="GO:0031267">
    <property type="term" value="F:small GTPase binding"/>
    <property type="evidence" value="ECO:0007669"/>
    <property type="project" value="InterPro"/>
</dbReference>
<dbReference type="GO" id="GO:0006886">
    <property type="term" value="P:intracellular protein transport"/>
    <property type="evidence" value="ECO:0007669"/>
    <property type="project" value="InterPro"/>
</dbReference>
<dbReference type="FunFam" id="1.25.10.10:FF:000053">
    <property type="entry name" value="Importin 7"/>
    <property type="match status" value="1"/>
</dbReference>
<dbReference type="Gene3D" id="1.25.10.10">
    <property type="entry name" value="Leucine-rich Repeat Variant"/>
    <property type="match status" value="1"/>
</dbReference>
<dbReference type="InterPro" id="IPR011989">
    <property type="entry name" value="ARM-like"/>
</dbReference>
<dbReference type="InterPro" id="IPR016024">
    <property type="entry name" value="ARM-type_fold"/>
</dbReference>
<dbReference type="InterPro" id="IPR001494">
    <property type="entry name" value="Importin-beta_N"/>
</dbReference>
<dbReference type="PANTHER" id="PTHR10997">
    <property type="entry name" value="IMPORTIN-7, 8, 11"/>
    <property type="match status" value="1"/>
</dbReference>
<dbReference type="PANTHER" id="PTHR10997:SF26">
    <property type="entry name" value="IMPORTIN-8"/>
    <property type="match status" value="1"/>
</dbReference>
<dbReference type="Pfam" id="PF03810">
    <property type="entry name" value="IBN_N"/>
    <property type="match status" value="1"/>
</dbReference>
<dbReference type="SMART" id="SM00913">
    <property type="entry name" value="IBN_N"/>
    <property type="match status" value="1"/>
</dbReference>
<dbReference type="SUPFAM" id="SSF48371">
    <property type="entry name" value="ARM repeat"/>
    <property type="match status" value="1"/>
</dbReference>
<dbReference type="PROSITE" id="PS50166">
    <property type="entry name" value="IMPORTIN_B_NT"/>
    <property type="match status" value="1"/>
</dbReference>
<gene>
    <name type="primary">ipo8</name>
</gene>
<organism>
    <name type="scientific">Danio rerio</name>
    <name type="common">Zebrafish</name>
    <name type="synonym">Brachydanio rerio</name>
    <dbReference type="NCBI Taxonomy" id="7955"/>
    <lineage>
        <taxon>Eukaryota</taxon>
        <taxon>Metazoa</taxon>
        <taxon>Chordata</taxon>
        <taxon>Craniata</taxon>
        <taxon>Vertebrata</taxon>
        <taxon>Euteleostomi</taxon>
        <taxon>Actinopterygii</taxon>
        <taxon>Neopterygii</taxon>
        <taxon>Teleostei</taxon>
        <taxon>Ostariophysi</taxon>
        <taxon>Cypriniformes</taxon>
        <taxon>Danionidae</taxon>
        <taxon>Danioninae</taxon>
        <taxon>Danio</taxon>
    </lineage>
</organism>
<accession>A5WW24</accession>
<evidence type="ECO:0000250" key="1"/>
<evidence type="ECO:0000250" key="2">
    <source>
        <dbReference type="UniProtKB" id="O15397"/>
    </source>
</evidence>
<evidence type="ECO:0000255" key="3">
    <source>
        <dbReference type="PROSITE-ProRule" id="PRU00115"/>
    </source>
</evidence>
<evidence type="ECO:0000256" key="4">
    <source>
        <dbReference type="SAM" id="MobiDB-lite"/>
    </source>
</evidence>
<evidence type="ECO:0000269" key="5">
    <source>
    </source>
</evidence>
<evidence type="ECO:0000305" key="6"/>
<evidence type="ECO:0000305" key="7">
    <source>
    </source>
</evidence>
<sequence>MDPNRIIQALKGTIDPNLRLAAENELNQSYKIINFAPTLLQIIVSEQVEFPVRQAAAIYLKNMVSQYWQDREPTLGEVVFPFNIHENDRGQIRENMVEAIIRCPESIRAQLTVCLRAIIKHDFPGRWTGVVDKINLYLQSQNSGSWYGSLLALYQLVKNYEFKKAEERDPLLAAMQIFLPRLQQLITQLLSDATFISVLIQKQILKIFHALVQLINNTVMTHWMEILRTVVDRDVPAIWFSECLRGGFQETLEADEDDRPELIWWKCKKWALHILTRIFERYGSPGNVTKEYVEFADFFLKTYALGIQQVLLKVMEQHRQRQYVSPRVLQQTLSFMTQGVSHSLTWRQMKPHMQTITHELVFPLMCYKDEDERLWQEDPYEYIRMKFNVYDDHVSPATAAQTLLCTAARKRKEVLPQMMEFCHQILVDPSADPRRTDGALHVIGTLAQPLLKKRVYRDQMELMLQNYVFPLLNSNLAYLRARSCWVLHSFSPLKFHNELVLRNAVELVKHNLVEDKEMPVKVEAAIALQTLVRNQEQAKVYIRPFIRPVMQELLHIIKETENDDLTGVIQKMICEYSEEVTVIAVDMTQNLAEIFSKILQSEEYEESEDKTVMALGILSTIDTILTVMGDRKEISQQLEGICLQVIGLVLQKPIIGMAEFYEEILSLAFGLTCYCISPQMWQLLGVLYDVFQHDCFDYFTDMMPLLHNYVTVDTNMLLSDPKYLEVIYTMCKKVLTSDAGEDPECHAAKLLEVIILQCRGRGIDQCIPLFVEAVLERLTRGVKSSELRTMCLQVVIAALYYNPTLLIHTLENIRFPHSPEPITAQFINQWMNDTEFFLGLHDRKMCVIGLSILMELPSRPAVLEEVVGQIVPSVLLLFLGLKHIYASRVLNKPEQFGRAQGSEEEENEEIPSDEDEVGEKGVALQPSVAPTGNDNEDDDDEDDDEYWDDEGLEGTPLEEYSTPLDCDNGEDEYQFFTASLLRVQSSDAGWYQSLTSPLNEDQRKQLQEIYNLAQQRRSTGVKGL</sequence>
<comment type="function">
    <text evidence="2 7">Involved in nuclear protein import, either by acting as autonomous nuclear transport receptor or as an adapter-like protein in association with the importin-beta subunit KPNB1. Acting autonomously, may serve as receptor for nuclear localization signals (NLS) and promote translocation of import substrates through the nuclear pore complex (NPC) by an energy requiring, Ran-dependent mechanism. At the nucleoplasmic side of the NPC, Ran binds to importin, the importin/substrate complex dissociates and importin is re-exported from the nucleus to the cytoplasm where GTP hydrolysis releases Ran. The directionality of nuclear import is thought to be conferred by an asymmetric distribution of the GTP- and GDP-bound forms of Ran between the cytoplasm and nucleus. In vitro mediates the nuclear import of the signal recognition particle protein SRP19 (By similarity). May also be involved in cytoplasm-to-nucleus shuttling of a broad spectrum of other cargos, including Argonaute-microRNAs complexes, the JUN protein, RELA/NF-kappa-B p65 subunit, the translation initiation factor EIF4E and a set of receptor-activated mothers against decapentaplegic homolog (SMAD) transcription factors that play a critical role downstream of the large family of transforming growth factor beta and bone morphogenetic protein (BMP) cytokines (Probable).</text>
</comment>
<comment type="subcellular location">
    <subcellularLocation>
        <location evidence="1">Cytoplasm</location>
    </subcellularLocation>
    <subcellularLocation>
        <location evidence="1">Nucleus</location>
    </subcellularLocation>
</comment>
<comment type="disruption phenotype">
    <text evidence="5">Knockout animals present mild to severe dorso-ventral patterning defects during early embryonic development and display severe cardiovascular and skeletal defects.</text>
</comment>
<comment type="similarity">
    <text evidence="6">Belongs to the importin beta family.</text>
</comment>